<gene>
    <name evidence="1" type="primary">lpxB</name>
    <name type="ordered locus">GbCGDNIH1_1441</name>
</gene>
<proteinExistence type="inferred from homology"/>
<feature type="chain" id="PRO_1000072224" description="Lipid-A-disaccharide synthase">
    <location>
        <begin position="1"/>
        <end position="393"/>
    </location>
</feature>
<name>LPXB_GRABC</name>
<sequence>MTAPLIYIVAGEHSGDVLGARLIHALRAINPSIRFAGIGGPRMEECGFQSLFPMHELAVMGLIEILPRVLKLRRRLQQTVQDIETRRPDLVLTIDSPGFCLRLLRAIQPFGIKRVHYVAPQVWAWREHRVKRFPGLWERMLCLLPFEEKWFAERNVPGQFVGHPVLESGADQGDAARFRARHSLADNARVIVLMPGSRANEAGRLLPVYGETLRLLMQNIPTITPVIPLASSTAHTVRGAVSSWPVQPIFITDIADKHDAFAAAEAALTKSGTSTLELAMGGVPMAVTYRVNRITAMMARRLIRVPYVAMVNLLAGREIVPELLQENCTPTKIAAVLTSLMNNAPDTNGMGAADSQKQALKAVVASLHAPNRHASDGLPSSAAAASIMEVLGQ</sequence>
<reference key="1">
    <citation type="journal article" date="2007" name="J. Bacteriol.">
        <title>Genome sequence analysis of the emerging human pathogenic acetic acid bacterium Granulibacter bethesdensis.</title>
        <authorList>
            <person name="Greenberg D.E."/>
            <person name="Porcella S.F."/>
            <person name="Zelazny A.M."/>
            <person name="Virtaneva K."/>
            <person name="Sturdevant D.E."/>
            <person name="Kupko J.J. III"/>
            <person name="Barbian K.D."/>
            <person name="Babar A."/>
            <person name="Dorward D.W."/>
            <person name="Holland S.M."/>
        </authorList>
    </citation>
    <scope>NUCLEOTIDE SEQUENCE [LARGE SCALE GENOMIC DNA]</scope>
    <source>
        <strain>ATCC BAA-1260 / CGDNIH1</strain>
    </source>
</reference>
<dbReference type="EC" id="2.4.1.182" evidence="1"/>
<dbReference type="EMBL" id="CP000394">
    <property type="protein sequence ID" value="ABI62339.1"/>
    <property type="molecule type" value="Genomic_DNA"/>
</dbReference>
<dbReference type="RefSeq" id="WP_011632143.1">
    <property type="nucleotide sequence ID" value="NC_008343.2"/>
</dbReference>
<dbReference type="SMR" id="Q0BS63"/>
<dbReference type="STRING" id="391165.GbCGDNIH1_1441"/>
<dbReference type="CAZy" id="GT19">
    <property type="family name" value="Glycosyltransferase Family 19"/>
</dbReference>
<dbReference type="KEGG" id="gbe:GbCGDNIH1_1441"/>
<dbReference type="eggNOG" id="COG0763">
    <property type="taxonomic scope" value="Bacteria"/>
</dbReference>
<dbReference type="HOGENOM" id="CLU_036577_3_0_5"/>
<dbReference type="OrthoDB" id="9801642at2"/>
<dbReference type="UniPathway" id="UPA00973"/>
<dbReference type="Proteomes" id="UP000001963">
    <property type="component" value="Chromosome"/>
</dbReference>
<dbReference type="GO" id="GO:0016020">
    <property type="term" value="C:membrane"/>
    <property type="evidence" value="ECO:0007669"/>
    <property type="project" value="GOC"/>
</dbReference>
<dbReference type="GO" id="GO:0008915">
    <property type="term" value="F:lipid-A-disaccharide synthase activity"/>
    <property type="evidence" value="ECO:0007669"/>
    <property type="project" value="UniProtKB-UniRule"/>
</dbReference>
<dbReference type="GO" id="GO:0005543">
    <property type="term" value="F:phospholipid binding"/>
    <property type="evidence" value="ECO:0007669"/>
    <property type="project" value="TreeGrafter"/>
</dbReference>
<dbReference type="GO" id="GO:0009245">
    <property type="term" value="P:lipid A biosynthetic process"/>
    <property type="evidence" value="ECO:0007669"/>
    <property type="project" value="UniProtKB-UniRule"/>
</dbReference>
<dbReference type="HAMAP" id="MF_00392">
    <property type="entry name" value="LpxB"/>
    <property type="match status" value="1"/>
</dbReference>
<dbReference type="InterPro" id="IPR003835">
    <property type="entry name" value="Glyco_trans_19"/>
</dbReference>
<dbReference type="NCBIfam" id="TIGR00215">
    <property type="entry name" value="lpxB"/>
    <property type="match status" value="1"/>
</dbReference>
<dbReference type="PANTHER" id="PTHR30372">
    <property type="entry name" value="LIPID-A-DISACCHARIDE SYNTHASE"/>
    <property type="match status" value="1"/>
</dbReference>
<dbReference type="PANTHER" id="PTHR30372:SF4">
    <property type="entry name" value="LIPID-A-DISACCHARIDE SYNTHASE, MITOCHONDRIAL-RELATED"/>
    <property type="match status" value="1"/>
</dbReference>
<dbReference type="Pfam" id="PF02684">
    <property type="entry name" value="LpxB"/>
    <property type="match status" value="1"/>
</dbReference>
<dbReference type="SUPFAM" id="SSF53756">
    <property type="entry name" value="UDP-Glycosyltransferase/glycogen phosphorylase"/>
    <property type="match status" value="1"/>
</dbReference>
<evidence type="ECO:0000255" key="1">
    <source>
        <dbReference type="HAMAP-Rule" id="MF_00392"/>
    </source>
</evidence>
<protein>
    <recommendedName>
        <fullName evidence="1">Lipid-A-disaccharide synthase</fullName>
        <ecNumber evidence="1">2.4.1.182</ecNumber>
    </recommendedName>
</protein>
<keyword id="KW-0328">Glycosyltransferase</keyword>
<keyword id="KW-0441">Lipid A biosynthesis</keyword>
<keyword id="KW-0444">Lipid biosynthesis</keyword>
<keyword id="KW-0443">Lipid metabolism</keyword>
<keyword id="KW-1185">Reference proteome</keyword>
<keyword id="KW-0808">Transferase</keyword>
<comment type="function">
    <text evidence="1">Condensation of UDP-2,3-diacylglucosamine and 2,3-diacylglucosamine-1-phosphate to form lipid A disaccharide, a precursor of lipid A, a phosphorylated glycolipid that anchors the lipopolysaccharide to the outer membrane of the cell.</text>
</comment>
<comment type="catalytic activity">
    <reaction evidence="1">
        <text>a lipid X + a UDP-2-N,3-O-bis[(3R)-3-hydroxyacyl]-alpha-D-glucosamine = a lipid A disaccharide + UDP + H(+)</text>
        <dbReference type="Rhea" id="RHEA:67828"/>
        <dbReference type="ChEBI" id="CHEBI:15378"/>
        <dbReference type="ChEBI" id="CHEBI:58223"/>
        <dbReference type="ChEBI" id="CHEBI:137748"/>
        <dbReference type="ChEBI" id="CHEBI:176338"/>
        <dbReference type="ChEBI" id="CHEBI:176343"/>
        <dbReference type="EC" id="2.4.1.182"/>
    </reaction>
</comment>
<comment type="pathway">
    <text evidence="1">Bacterial outer membrane biogenesis; LPS lipid A biosynthesis.</text>
</comment>
<comment type="similarity">
    <text evidence="1">Belongs to the LpxB family.</text>
</comment>
<accession>Q0BS63</accession>
<organism>
    <name type="scientific">Granulibacter bethesdensis (strain ATCC BAA-1260 / CGDNIH1)</name>
    <dbReference type="NCBI Taxonomy" id="391165"/>
    <lineage>
        <taxon>Bacteria</taxon>
        <taxon>Pseudomonadati</taxon>
        <taxon>Pseudomonadota</taxon>
        <taxon>Alphaproteobacteria</taxon>
        <taxon>Acetobacterales</taxon>
        <taxon>Acetobacteraceae</taxon>
        <taxon>Granulibacter</taxon>
    </lineage>
</organism>